<name>TRMN6_SHIF8</name>
<feature type="chain" id="PRO_0000387437" description="tRNA1(Val) (adenine(37)-N6)-methyltransferase">
    <location>
        <begin position="1"/>
        <end position="245"/>
    </location>
</feature>
<gene>
    <name evidence="1" type="primary">yfiC</name>
    <name type="ordered locus">SFV_2638</name>
</gene>
<protein>
    <recommendedName>
        <fullName evidence="1">tRNA1(Val) (adenine(37)-N6)-methyltransferase</fullName>
        <ecNumber evidence="1">2.1.1.223</ecNumber>
    </recommendedName>
    <alternativeName>
        <fullName evidence="1">tRNA m6A37 methyltransferase</fullName>
    </alternativeName>
</protein>
<evidence type="ECO:0000255" key="1">
    <source>
        <dbReference type="HAMAP-Rule" id="MF_01872"/>
    </source>
</evidence>
<evidence type="ECO:0000305" key="2"/>
<organism>
    <name type="scientific">Shigella flexneri serotype 5b (strain 8401)</name>
    <dbReference type="NCBI Taxonomy" id="373384"/>
    <lineage>
        <taxon>Bacteria</taxon>
        <taxon>Pseudomonadati</taxon>
        <taxon>Pseudomonadota</taxon>
        <taxon>Gammaproteobacteria</taxon>
        <taxon>Enterobacterales</taxon>
        <taxon>Enterobacteriaceae</taxon>
        <taxon>Shigella</taxon>
    </lineage>
</organism>
<sequence>MSQSTSVLRRNGFTFKQFFVAHDRCAMKVGTDGILLGAWAPVAGVKRCLDIGAGSGLLALMLAQRTSDSVIIDAVELESEAAAQAQENINQSPWAERINVHTADIQQWITQQTVRFDLIISNPPYYQQGVECATPQREQARYTTTLDHPSLLTCAAECITEEGFFCVVLPEQIGNGFTELALSMGWHLRLRTDVAENEARLPHRVLLAFSPQAGECFSDRLVIRGPDQNYSEAYTALTQAFYLFM</sequence>
<dbReference type="EC" id="2.1.1.223" evidence="1"/>
<dbReference type="EMBL" id="CP000266">
    <property type="protein sequence ID" value="ABF04734.1"/>
    <property type="status" value="ALT_INIT"/>
    <property type="molecule type" value="Genomic_DNA"/>
</dbReference>
<dbReference type="SMR" id="Q0T1T1"/>
<dbReference type="KEGG" id="sfv:SFV_2638"/>
<dbReference type="HOGENOM" id="CLU_061983_0_0_6"/>
<dbReference type="Proteomes" id="UP000000659">
    <property type="component" value="Chromosome"/>
</dbReference>
<dbReference type="GO" id="GO:0005737">
    <property type="term" value="C:cytoplasm"/>
    <property type="evidence" value="ECO:0007669"/>
    <property type="project" value="UniProtKB-SubCell"/>
</dbReference>
<dbReference type="GO" id="GO:0003676">
    <property type="term" value="F:nucleic acid binding"/>
    <property type="evidence" value="ECO:0007669"/>
    <property type="project" value="InterPro"/>
</dbReference>
<dbReference type="GO" id="GO:0016430">
    <property type="term" value="F:tRNA (adenine-N6)-methyltransferase activity"/>
    <property type="evidence" value="ECO:0007669"/>
    <property type="project" value="UniProtKB-UniRule"/>
</dbReference>
<dbReference type="GO" id="GO:0032259">
    <property type="term" value="P:methylation"/>
    <property type="evidence" value="ECO:0007669"/>
    <property type="project" value="UniProtKB-KW"/>
</dbReference>
<dbReference type="GO" id="GO:0008033">
    <property type="term" value="P:tRNA processing"/>
    <property type="evidence" value="ECO:0007669"/>
    <property type="project" value="UniProtKB-UniRule"/>
</dbReference>
<dbReference type="CDD" id="cd02440">
    <property type="entry name" value="AdoMet_MTases"/>
    <property type="match status" value="1"/>
</dbReference>
<dbReference type="FunFam" id="3.40.50.150:FF:000087">
    <property type="entry name" value="tRNA1(Val) (adenine(37)-N6)-methyltransferase"/>
    <property type="match status" value="1"/>
</dbReference>
<dbReference type="Gene3D" id="3.40.50.150">
    <property type="entry name" value="Vaccinia Virus protein VP39"/>
    <property type="match status" value="1"/>
</dbReference>
<dbReference type="HAMAP" id="MF_01872">
    <property type="entry name" value="tRNA_methyltr_YfiC"/>
    <property type="match status" value="1"/>
</dbReference>
<dbReference type="InterPro" id="IPR002052">
    <property type="entry name" value="DNA_methylase_N6_adenine_CS"/>
</dbReference>
<dbReference type="InterPro" id="IPR029063">
    <property type="entry name" value="SAM-dependent_MTases_sf"/>
</dbReference>
<dbReference type="InterPro" id="IPR007848">
    <property type="entry name" value="Small_mtfrase_dom"/>
</dbReference>
<dbReference type="InterPro" id="IPR050210">
    <property type="entry name" value="tRNA_Adenine-N(6)_MTase"/>
</dbReference>
<dbReference type="InterPro" id="IPR022882">
    <property type="entry name" value="tRNA_adenine-N6_MeTrfase"/>
</dbReference>
<dbReference type="NCBIfam" id="NF047853">
    <property type="entry name" value="tRm6a37MtseTrmN"/>
    <property type="match status" value="1"/>
</dbReference>
<dbReference type="PANTHER" id="PTHR47739">
    <property type="entry name" value="TRNA1(VAL) (ADENINE(37)-N6)-METHYLTRANSFERASE"/>
    <property type="match status" value="1"/>
</dbReference>
<dbReference type="PANTHER" id="PTHR47739:SF1">
    <property type="entry name" value="TRNA1(VAL) (ADENINE(37)-N6)-METHYLTRANSFERASE"/>
    <property type="match status" value="1"/>
</dbReference>
<dbReference type="Pfam" id="PF05175">
    <property type="entry name" value="MTS"/>
    <property type="match status" value="1"/>
</dbReference>
<dbReference type="SUPFAM" id="SSF53335">
    <property type="entry name" value="S-adenosyl-L-methionine-dependent methyltransferases"/>
    <property type="match status" value="1"/>
</dbReference>
<dbReference type="PROSITE" id="PS00092">
    <property type="entry name" value="N6_MTASE"/>
    <property type="match status" value="1"/>
</dbReference>
<keyword id="KW-0963">Cytoplasm</keyword>
<keyword id="KW-0489">Methyltransferase</keyword>
<keyword id="KW-0949">S-adenosyl-L-methionine</keyword>
<keyword id="KW-0808">Transferase</keyword>
<keyword id="KW-0819">tRNA processing</keyword>
<comment type="function">
    <text evidence="1">Specifically methylates the adenine in position 37 of tRNA(1)(Val) (anticodon cmo5UAC).</text>
</comment>
<comment type="catalytic activity">
    <reaction evidence="1">
        <text>adenosine(37) in tRNA1(Val) + S-adenosyl-L-methionine = N(6)-methyladenosine(37) in tRNA1(Val) + S-adenosyl-L-homocysteine + H(+)</text>
        <dbReference type="Rhea" id="RHEA:43160"/>
        <dbReference type="Rhea" id="RHEA-COMP:10369"/>
        <dbReference type="Rhea" id="RHEA-COMP:10370"/>
        <dbReference type="ChEBI" id="CHEBI:15378"/>
        <dbReference type="ChEBI" id="CHEBI:57856"/>
        <dbReference type="ChEBI" id="CHEBI:59789"/>
        <dbReference type="ChEBI" id="CHEBI:74411"/>
        <dbReference type="ChEBI" id="CHEBI:74449"/>
        <dbReference type="EC" id="2.1.1.223"/>
    </reaction>
</comment>
<comment type="subcellular location">
    <subcellularLocation>
        <location evidence="1">Cytoplasm</location>
    </subcellularLocation>
</comment>
<comment type="similarity">
    <text evidence="1">Belongs to the methyltransferase superfamily. tRNA (adenine-N(6)-)-methyltransferase family.</text>
</comment>
<comment type="sequence caution" evidence="2">
    <conflict type="erroneous initiation">
        <sequence resource="EMBL-CDS" id="ABF04734"/>
    </conflict>
</comment>
<accession>Q0T1T1</accession>
<proteinExistence type="inferred from homology"/>
<reference key="1">
    <citation type="journal article" date="2006" name="BMC Genomics">
        <title>Complete genome sequence of Shigella flexneri 5b and comparison with Shigella flexneri 2a.</title>
        <authorList>
            <person name="Nie H."/>
            <person name="Yang F."/>
            <person name="Zhang X."/>
            <person name="Yang J."/>
            <person name="Chen L."/>
            <person name="Wang J."/>
            <person name="Xiong Z."/>
            <person name="Peng J."/>
            <person name="Sun L."/>
            <person name="Dong J."/>
            <person name="Xue Y."/>
            <person name="Xu X."/>
            <person name="Chen S."/>
            <person name="Yao Z."/>
            <person name="Shen Y."/>
            <person name="Jin Q."/>
        </authorList>
    </citation>
    <scope>NUCLEOTIDE SEQUENCE [LARGE SCALE GENOMIC DNA]</scope>
    <source>
        <strain>8401</strain>
    </source>
</reference>